<proteinExistence type="evidence at transcript level"/>
<comment type="function">
    <text>Involved in the presentation of foreign antigens to the immune system.</text>
</comment>
<comment type="subunit">
    <text>Heterodimer of an alpha chain and a beta chain (beta-2-microglobulin).</text>
</comment>
<comment type="subcellular location">
    <subcellularLocation>
        <location>Membrane</location>
        <topology>Single-pass type I membrane protein</topology>
    </subcellularLocation>
</comment>
<comment type="similarity">
    <text evidence="6">Belongs to the MHC class I family.</text>
</comment>
<accession>P30379</accession>
<sequence>MRVTAPRTLLLLLSAALALTETWAGSHSMRYFDTAVSRPGRGEPRFITVGYVDDTQFVRFDSDAASPRMEPRAPWIEQEGPEYWDRETQTSKAQAQTDRENLRIALRYYNQSEAGSHTIQRMFGCDVGPDGRLLRGYSQSAYDGKDYIALNEDLSSWTAADTAAQITQRKWEAAREAEQLRAYLEGTCVEWLRRYLENGRETLQRADTPKTHVTHHPISDHEATLRCWALGFYPAEITLTWQRDGEDQTQDTELVETRPAGDGTFQKWAAVVVPSGEEERYTCHVQHEGLPKPLTLRWEPSSQSTIPIVGIVAGLAVLAVVVIGAVVTAVICRRKSSGGKGGSYSQAASSDSAQGSDVSLTA</sequence>
<organism>
    <name type="scientific">Gorilla gorilla gorilla</name>
    <name type="common">Western lowland gorilla</name>
    <dbReference type="NCBI Taxonomy" id="9595"/>
    <lineage>
        <taxon>Eukaryota</taxon>
        <taxon>Metazoa</taxon>
        <taxon>Chordata</taxon>
        <taxon>Craniata</taxon>
        <taxon>Vertebrata</taxon>
        <taxon>Euteleostomi</taxon>
        <taxon>Mammalia</taxon>
        <taxon>Eutheria</taxon>
        <taxon>Euarchontoglires</taxon>
        <taxon>Primates</taxon>
        <taxon>Haplorrhini</taxon>
        <taxon>Catarrhini</taxon>
        <taxon>Hominidae</taxon>
        <taxon>Gorilla</taxon>
    </lineage>
</organism>
<evidence type="ECO:0000250" key="1"/>
<evidence type="ECO:0000250" key="2">
    <source>
        <dbReference type="UniProtKB" id="P01900"/>
    </source>
</evidence>
<evidence type="ECO:0000255" key="3"/>
<evidence type="ECO:0000255" key="4">
    <source>
        <dbReference type="PROSITE-ProRule" id="PRU00114"/>
    </source>
</evidence>
<evidence type="ECO:0000256" key="5">
    <source>
        <dbReference type="SAM" id="MobiDB-lite"/>
    </source>
</evidence>
<evidence type="ECO:0000305" key="6"/>
<feature type="signal peptide" evidence="1">
    <location>
        <begin position="1"/>
        <end position="24"/>
    </location>
</feature>
<feature type="chain" id="PRO_0000018901" description="Class I histocompatibility antigen, Gogo-B*0101 alpha chain">
    <location>
        <begin position="25"/>
        <end position="362"/>
    </location>
</feature>
<feature type="topological domain" description="Extracellular" evidence="3">
    <location>
        <begin position="25"/>
        <end position="308"/>
    </location>
</feature>
<feature type="transmembrane region" description="Helical" evidence="3">
    <location>
        <begin position="309"/>
        <end position="332"/>
    </location>
</feature>
<feature type="topological domain" description="Cytoplasmic" evidence="3">
    <location>
        <begin position="333"/>
        <end position="362"/>
    </location>
</feature>
<feature type="domain" description="Ig-like C1-type">
    <location>
        <begin position="209"/>
        <end position="295"/>
    </location>
</feature>
<feature type="region of interest" description="Alpha-1">
    <location>
        <begin position="25"/>
        <end position="114"/>
    </location>
</feature>
<feature type="region of interest" description="Alpha-2">
    <location>
        <begin position="115"/>
        <end position="206"/>
    </location>
</feature>
<feature type="region of interest" description="Alpha-3">
    <location>
        <begin position="207"/>
        <end position="298"/>
    </location>
</feature>
<feature type="region of interest" description="Connecting peptide">
    <location>
        <begin position="299"/>
        <end position="308"/>
    </location>
</feature>
<feature type="region of interest" description="Disordered" evidence="5">
    <location>
        <begin position="335"/>
        <end position="362"/>
    </location>
</feature>
<feature type="compositionally biased region" description="Low complexity" evidence="5">
    <location>
        <begin position="343"/>
        <end position="362"/>
    </location>
</feature>
<feature type="modified residue" description="Phosphoserine" evidence="2">
    <location>
        <position position="356"/>
    </location>
</feature>
<feature type="modified residue" description="Phosphoserine" evidence="2">
    <location>
        <position position="359"/>
    </location>
</feature>
<feature type="glycosylation site" description="N-linked (GlcNAc...) asparagine" evidence="1">
    <location>
        <position position="110"/>
    </location>
</feature>
<feature type="disulfide bond" evidence="4">
    <location>
        <begin position="125"/>
        <end position="188"/>
    </location>
</feature>
<feature type="disulfide bond" evidence="4">
    <location>
        <begin position="227"/>
        <end position="283"/>
    </location>
</feature>
<keyword id="KW-1015">Disulfide bond</keyword>
<keyword id="KW-0325">Glycoprotein</keyword>
<keyword id="KW-0391">Immunity</keyword>
<keyword id="KW-0472">Membrane</keyword>
<keyword id="KW-0490">MHC I</keyword>
<keyword id="KW-0597">Phosphoprotein</keyword>
<keyword id="KW-1185">Reference proteome</keyword>
<keyword id="KW-0732">Signal</keyword>
<keyword id="KW-0812">Transmembrane</keyword>
<keyword id="KW-1133">Transmembrane helix</keyword>
<name>1B01_GORGO</name>
<reference key="1">
    <citation type="journal article" date="1991" name="J. Exp. Med.">
        <title>Gorilla class I major histocompatibility complex alleles: comparison to human and chimpanzee class I.</title>
        <authorList>
            <person name="Lawlor D.A."/>
            <person name="Warren E."/>
            <person name="Taylor P."/>
            <person name="Parham P."/>
        </authorList>
    </citation>
    <scope>NUCLEOTIDE SEQUENCE [MRNA]</scope>
</reference>
<dbReference type="EMBL" id="X60255">
    <property type="protein sequence ID" value="CAA42807.1"/>
    <property type="molecule type" value="mRNA"/>
</dbReference>
<dbReference type="PIR" id="JH0539">
    <property type="entry name" value="JH0539"/>
</dbReference>
<dbReference type="SMR" id="P30379"/>
<dbReference type="FunCoup" id="P30379">
    <property type="interactions" value="802"/>
</dbReference>
<dbReference type="InParanoid" id="P30379"/>
<dbReference type="Proteomes" id="UP000001519">
    <property type="component" value="Unplaced"/>
</dbReference>
<dbReference type="GO" id="GO:0031901">
    <property type="term" value="C:early endosome membrane"/>
    <property type="evidence" value="ECO:0007669"/>
    <property type="project" value="UniProtKB-ARBA"/>
</dbReference>
<dbReference type="GO" id="GO:0012507">
    <property type="term" value="C:ER to Golgi transport vesicle membrane"/>
    <property type="evidence" value="ECO:0007669"/>
    <property type="project" value="UniProtKB-ARBA"/>
</dbReference>
<dbReference type="GO" id="GO:0009897">
    <property type="term" value="C:external side of plasma membrane"/>
    <property type="evidence" value="ECO:0000318"/>
    <property type="project" value="GO_Central"/>
</dbReference>
<dbReference type="GO" id="GO:0005615">
    <property type="term" value="C:extracellular space"/>
    <property type="evidence" value="ECO:0000318"/>
    <property type="project" value="GO_Central"/>
</dbReference>
<dbReference type="GO" id="GO:0098553">
    <property type="term" value="C:lumenal side of endoplasmic reticulum membrane"/>
    <property type="evidence" value="ECO:0007669"/>
    <property type="project" value="UniProtKB-ARBA"/>
</dbReference>
<dbReference type="GO" id="GO:0042612">
    <property type="term" value="C:MHC class I protein complex"/>
    <property type="evidence" value="ECO:0007669"/>
    <property type="project" value="UniProtKB-KW"/>
</dbReference>
<dbReference type="GO" id="GO:0030670">
    <property type="term" value="C:phagocytic vesicle membrane"/>
    <property type="evidence" value="ECO:0007669"/>
    <property type="project" value="UniProtKB-ARBA"/>
</dbReference>
<dbReference type="GO" id="GO:0055038">
    <property type="term" value="C:recycling endosome membrane"/>
    <property type="evidence" value="ECO:0007669"/>
    <property type="project" value="UniProtKB-ARBA"/>
</dbReference>
<dbReference type="GO" id="GO:0042605">
    <property type="term" value="F:peptide antigen binding"/>
    <property type="evidence" value="ECO:0000318"/>
    <property type="project" value="GO_Central"/>
</dbReference>
<dbReference type="GO" id="GO:0005102">
    <property type="term" value="F:signaling receptor binding"/>
    <property type="evidence" value="ECO:0000318"/>
    <property type="project" value="GO_Central"/>
</dbReference>
<dbReference type="GO" id="GO:0002486">
    <property type="term" value="P:antigen processing and presentation of endogenous peptide antigen via MHC class I via ER pathway, TAP-independent"/>
    <property type="evidence" value="ECO:0000318"/>
    <property type="project" value="GO_Central"/>
</dbReference>
<dbReference type="GO" id="GO:0002476">
    <property type="term" value="P:antigen processing and presentation of endogenous peptide antigen via MHC class Ib"/>
    <property type="evidence" value="ECO:0000318"/>
    <property type="project" value="GO_Central"/>
</dbReference>
<dbReference type="GO" id="GO:0006955">
    <property type="term" value="P:immune response"/>
    <property type="evidence" value="ECO:0000318"/>
    <property type="project" value="GO_Central"/>
</dbReference>
<dbReference type="GO" id="GO:0001916">
    <property type="term" value="P:positive regulation of T cell mediated cytotoxicity"/>
    <property type="evidence" value="ECO:0000318"/>
    <property type="project" value="GO_Central"/>
</dbReference>
<dbReference type="CDD" id="cd21026">
    <property type="entry name" value="IgC1_MHC_Ia_HLA-B"/>
    <property type="match status" value="1"/>
</dbReference>
<dbReference type="FunFam" id="2.60.40.10:FF:000014">
    <property type="entry name" value="H-2 class I histocompatibility antigen, alpha chain"/>
    <property type="match status" value="1"/>
</dbReference>
<dbReference type="FunFam" id="3.30.500.10:FF:000001">
    <property type="entry name" value="H-2 class I histocompatibility antigen, alpha chain"/>
    <property type="match status" value="1"/>
</dbReference>
<dbReference type="Gene3D" id="2.60.40.10">
    <property type="entry name" value="Immunoglobulins"/>
    <property type="match status" value="1"/>
</dbReference>
<dbReference type="Gene3D" id="3.30.500.10">
    <property type="entry name" value="MHC class I-like antigen recognition-like"/>
    <property type="match status" value="1"/>
</dbReference>
<dbReference type="InterPro" id="IPR007110">
    <property type="entry name" value="Ig-like_dom"/>
</dbReference>
<dbReference type="InterPro" id="IPR036179">
    <property type="entry name" value="Ig-like_dom_sf"/>
</dbReference>
<dbReference type="InterPro" id="IPR013783">
    <property type="entry name" value="Ig-like_fold"/>
</dbReference>
<dbReference type="InterPro" id="IPR003006">
    <property type="entry name" value="Ig/MHC_CS"/>
</dbReference>
<dbReference type="InterPro" id="IPR003597">
    <property type="entry name" value="Ig_C1-set"/>
</dbReference>
<dbReference type="InterPro" id="IPR050208">
    <property type="entry name" value="MHC_class-I_related"/>
</dbReference>
<dbReference type="InterPro" id="IPR011161">
    <property type="entry name" value="MHC_I-like_Ag-recog"/>
</dbReference>
<dbReference type="InterPro" id="IPR037055">
    <property type="entry name" value="MHC_I-like_Ag-recog_sf"/>
</dbReference>
<dbReference type="InterPro" id="IPR011162">
    <property type="entry name" value="MHC_I/II-like_Ag-recog"/>
</dbReference>
<dbReference type="InterPro" id="IPR001039">
    <property type="entry name" value="MHC_I_a_a1/a2"/>
</dbReference>
<dbReference type="InterPro" id="IPR010579">
    <property type="entry name" value="MHC_I_a_C"/>
</dbReference>
<dbReference type="PANTHER" id="PTHR16675:SF279">
    <property type="entry name" value="CLASS I HISTOCOMPATIBILITY ANTIGEN, GOGO-B*0102 ALPHA CHAIN"/>
    <property type="match status" value="1"/>
</dbReference>
<dbReference type="PANTHER" id="PTHR16675">
    <property type="entry name" value="MHC CLASS I-RELATED"/>
    <property type="match status" value="1"/>
</dbReference>
<dbReference type="Pfam" id="PF07654">
    <property type="entry name" value="C1-set"/>
    <property type="match status" value="1"/>
</dbReference>
<dbReference type="Pfam" id="PF00129">
    <property type="entry name" value="MHC_I"/>
    <property type="match status" value="1"/>
</dbReference>
<dbReference type="Pfam" id="PF06623">
    <property type="entry name" value="MHC_I_C"/>
    <property type="match status" value="1"/>
</dbReference>
<dbReference type="PRINTS" id="PR01638">
    <property type="entry name" value="MHCCLASSI"/>
</dbReference>
<dbReference type="SMART" id="SM00407">
    <property type="entry name" value="IGc1"/>
    <property type="match status" value="1"/>
</dbReference>
<dbReference type="SUPFAM" id="SSF48726">
    <property type="entry name" value="Immunoglobulin"/>
    <property type="match status" value="1"/>
</dbReference>
<dbReference type="SUPFAM" id="SSF54452">
    <property type="entry name" value="MHC antigen-recognition domain"/>
    <property type="match status" value="1"/>
</dbReference>
<dbReference type="PROSITE" id="PS50835">
    <property type="entry name" value="IG_LIKE"/>
    <property type="match status" value="1"/>
</dbReference>
<dbReference type="PROSITE" id="PS00290">
    <property type="entry name" value="IG_MHC"/>
    <property type="match status" value="1"/>
</dbReference>
<protein>
    <recommendedName>
        <fullName>Class I histocompatibility antigen, Gogo-B*0101 alpha chain</fullName>
    </recommendedName>
</protein>